<reference key="1">
    <citation type="journal article" date="1996" name="Development">
        <title>Isolation and characterization of two new morphogenetically active peptides from Hydra vulgaris.</title>
        <authorList>
            <person name="Hoffmeister S.A.H."/>
        </authorList>
    </citation>
    <scope>PROTEIN SEQUENCE</scope>
</reference>
<dbReference type="Proteomes" id="UP000694840">
    <property type="component" value="Unplaced"/>
</dbReference>
<dbReference type="GO" id="GO:0016015">
    <property type="term" value="F:morphogen activity"/>
    <property type="evidence" value="ECO:0007669"/>
    <property type="project" value="UniProtKB-KW"/>
</dbReference>
<dbReference type="GO" id="GO:0009653">
    <property type="term" value="P:anatomical structure morphogenesis"/>
    <property type="evidence" value="ECO:0007669"/>
    <property type="project" value="UniProtKB-KW"/>
</dbReference>
<organism>
    <name type="scientific">Hydra vulgaris</name>
    <name type="common">Hydra</name>
    <name type="synonym">Hydra attenuata</name>
    <dbReference type="NCBI Taxonomy" id="6087"/>
    <lineage>
        <taxon>Eukaryota</taxon>
        <taxon>Metazoa</taxon>
        <taxon>Cnidaria</taxon>
        <taxon>Hydrozoa</taxon>
        <taxon>Hydroidolina</taxon>
        <taxon>Anthoathecata</taxon>
        <taxon>Aplanulata</taxon>
        <taxon>Hydridae</taxon>
        <taxon>Hydra</taxon>
    </lineage>
</organism>
<evidence type="ECO:0000256" key="1">
    <source>
        <dbReference type="SAM" id="MobiDB-lite"/>
    </source>
</evidence>
<protein>
    <recommendedName>
        <fullName>Pedibin</fullName>
    </recommendedName>
</protein>
<sequence>AGEDVSHELEEKEKALANHSE</sequence>
<accession>P80577</accession>
<name>PEDB_HYDVU</name>
<proteinExistence type="evidence at protein level"/>
<comment type="function">
    <text>Morphogenetically active peptide. Active in foot development.</text>
</comment>
<keyword id="KW-0903">Direct protein sequencing</keyword>
<keyword id="KW-0504">Morphogen</keyword>
<keyword id="KW-1185">Reference proteome</keyword>
<feature type="peptide" id="PRO_0000044200" description="Pedibin">
    <location>
        <begin position="1"/>
        <end position="21"/>
    </location>
</feature>
<feature type="region of interest" description="Disordered" evidence="1">
    <location>
        <begin position="1"/>
        <end position="21"/>
    </location>
</feature>